<comment type="function">
    <text evidence="4 8 9 10 11">Component of a microsomal membrane-bound long-chain fatty acid elongation system, which produces the 20-26-carbon very long-chain fatty acids (VLCFA) from long-chain fatty acid precursors and is involved ceramide and inositol sphingolipid biosynthesis. Component of elongase II, which elongates 16-18 carbon fatty acyl-CoAs such as palmitoyl-CoA and stearoyl-CoA to 20-22-carbon fatty acids by incorporation of malonyl-CoA (PubMed:12684876, PubMed:9211877). Involved in the synthesis of 1,3-beta-glucan (PubMed:7768822). The enzymes active site faces the cytosol, whereas VLCFA length is determined by a lysine near the luminal end of transmembrane helix 6 (PubMed:17719544). Plays an important role in lipotoxic cell death induced by oleic acid through maintaining a balanced fatty acid composition in thr plasma membrane (PubMed:29458843).</text>
</comment>
<comment type="catalytic activity">
    <reaction evidence="4">
        <text>a very-long-chain acyl-CoA + malonyl-CoA + H(+) = a very-long-chain 3-oxoacyl-CoA + CO2 + CoA</text>
        <dbReference type="Rhea" id="RHEA:32727"/>
        <dbReference type="ChEBI" id="CHEBI:15378"/>
        <dbReference type="ChEBI" id="CHEBI:16526"/>
        <dbReference type="ChEBI" id="CHEBI:57287"/>
        <dbReference type="ChEBI" id="CHEBI:57384"/>
        <dbReference type="ChEBI" id="CHEBI:90725"/>
        <dbReference type="ChEBI" id="CHEBI:90736"/>
        <dbReference type="EC" id="2.3.1.199"/>
    </reaction>
</comment>
<comment type="catalytic activity">
    <reaction evidence="8">
        <text>octadecanoyl-CoA + malonyl-CoA + H(+) = 3-oxoeicosanoyl-CoA + CO2 + CoA</text>
        <dbReference type="Rhea" id="RHEA:35319"/>
        <dbReference type="ChEBI" id="CHEBI:15378"/>
        <dbReference type="ChEBI" id="CHEBI:16526"/>
        <dbReference type="ChEBI" id="CHEBI:57287"/>
        <dbReference type="ChEBI" id="CHEBI:57384"/>
        <dbReference type="ChEBI" id="CHEBI:57394"/>
        <dbReference type="ChEBI" id="CHEBI:65115"/>
    </reaction>
    <physiologicalReaction direction="left-to-right" evidence="8">
        <dbReference type="Rhea" id="RHEA:35320"/>
    </physiologicalReaction>
</comment>
<comment type="catalytic activity">
    <reaction evidence="3 8">
        <text>hexadecanoyl-CoA + malonyl-CoA + H(+) = 3-oxooctadecanoyl-CoA + CO2 + CoA</text>
        <dbReference type="Rhea" id="RHEA:35315"/>
        <dbReference type="ChEBI" id="CHEBI:15378"/>
        <dbReference type="ChEBI" id="CHEBI:16526"/>
        <dbReference type="ChEBI" id="CHEBI:57287"/>
        <dbReference type="ChEBI" id="CHEBI:57379"/>
        <dbReference type="ChEBI" id="CHEBI:57384"/>
        <dbReference type="ChEBI" id="CHEBI:71407"/>
    </reaction>
    <physiologicalReaction direction="left-to-right" evidence="3 8">
        <dbReference type="Rhea" id="RHEA:35316"/>
    </physiologicalReaction>
</comment>
<comment type="catalytic activity">
    <reaction evidence="8">
        <text>eicosanoyl-CoA + malonyl-CoA + H(+) = 3-oxodocosanoyl-CoA + CO2 + CoA</text>
        <dbReference type="Rhea" id="RHEA:35327"/>
        <dbReference type="ChEBI" id="CHEBI:15378"/>
        <dbReference type="ChEBI" id="CHEBI:16526"/>
        <dbReference type="ChEBI" id="CHEBI:57287"/>
        <dbReference type="ChEBI" id="CHEBI:57380"/>
        <dbReference type="ChEBI" id="CHEBI:57384"/>
        <dbReference type="ChEBI" id="CHEBI:71451"/>
    </reaction>
    <physiologicalReaction direction="left-to-right" evidence="8">
        <dbReference type="Rhea" id="RHEA:35328"/>
    </physiologicalReaction>
</comment>
<comment type="catalytic activity">
    <reaction evidence="8">
        <text>docosanoyl-CoA + malonyl-CoA + H(+) = 3-oxotetracosanoyl-CoA + CO2 + CoA</text>
        <dbReference type="Rhea" id="RHEA:36507"/>
        <dbReference type="ChEBI" id="CHEBI:15378"/>
        <dbReference type="ChEBI" id="CHEBI:16526"/>
        <dbReference type="ChEBI" id="CHEBI:57287"/>
        <dbReference type="ChEBI" id="CHEBI:57384"/>
        <dbReference type="ChEBI" id="CHEBI:65059"/>
        <dbReference type="ChEBI" id="CHEBI:73977"/>
    </reaction>
    <physiologicalReaction direction="left-to-right" evidence="8">
        <dbReference type="Rhea" id="RHEA:36508"/>
    </physiologicalReaction>
</comment>
<comment type="subcellular location">
    <subcellularLocation>
        <location evidence="3 5 12">Endoplasmic reticulum membrane</location>
        <topology evidence="1">Multi-pass membrane protein</topology>
    </subcellularLocation>
</comment>
<comment type="domain">
    <text evidence="16">The C-terminal di-lysine-like motif may confer endoplasmic reticulum localization.</text>
</comment>
<comment type="domain">
    <text evidence="8">The HxxHH motif is essential for ELOp function in vivo and 3-keto acyl-CoA synthase activity in vitro.</text>
</comment>
<comment type="miscellaneous">
    <text evidence="6">Present with 3510 molecules/cell in log phase SD medium.</text>
</comment>
<comment type="similarity">
    <text evidence="17">Belongs to the ELO family.</text>
</comment>
<keyword id="KW-0256">Endoplasmic reticulum</keyword>
<keyword id="KW-0275">Fatty acid biosynthesis</keyword>
<keyword id="KW-0276">Fatty acid metabolism</keyword>
<keyword id="KW-0325">Glycoprotein</keyword>
<keyword id="KW-0444">Lipid biosynthesis</keyword>
<keyword id="KW-0443">Lipid metabolism</keyword>
<keyword id="KW-0472">Membrane</keyword>
<keyword id="KW-0597">Phosphoprotein</keyword>
<keyword id="KW-1185">Reference proteome</keyword>
<keyword id="KW-0808">Transferase</keyword>
<keyword id="KW-0812">Transmembrane</keyword>
<keyword id="KW-1133">Transmembrane helix</keyword>
<protein>
    <recommendedName>
        <fullName evidence="17">Fatty acid elongase 2</fullName>
        <ecNumber evidence="4">2.3.1.199</ecNumber>
    </recommendedName>
    <alternativeName>
        <fullName evidence="17">3-keto acyl-CoA synthase ELO2</fullName>
    </alternativeName>
    <alternativeName>
        <fullName evidence="15">Elongation of fatty acids protein 2</fullName>
    </alternativeName>
    <alternativeName>
        <fullName evidence="14">Fenpropimorph resistance protein 1</fullName>
    </alternativeName>
    <alternativeName>
        <fullName evidence="13">Glucan synthesis protein 1</fullName>
    </alternativeName>
    <alternativeName>
        <fullName evidence="17">Very-long-chain 3-oxoacyl-CoA synthase 2</fullName>
    </alternativeName>
    <alternativeName>
        <fullName evidence="16">v-SNARE bypass mutant gene 2 protein</fullName>
    </alternativeName>
</protein>
<reference key="1">
    <citation type="journal article" date="1995" name="J. Bacteriol.">
        <title>Cloning and characterization of GNS1: a Saccharomyces cerevisiae gene involved in synthesis of 1,3-beta-glucan in vitro.</title>
        <authorList>
            <person name="El-Sherbeini M."/>
            <person name="Clemas J.A."/>
        </authorList>
    </citation>
    <scope>NUCLEOTIDE SEQUENCE [GENOMIC DNA]</scope>
    <scope>FUNCTION</scope>
</reference>
<reference key="2">
    <citation type="journal article" date="1998" name="J. Cell Biol.">
        <title>Involvement of long chain fatty acid elongation in the trafficking of secretory vesicles in yeast.</title>
        <authorList>
            <person name="David D."/>
            <person name="Sundarababu S."/>
            <person name="Gerst J.E."/>
        </authorList>
    </citation>
    <scope>NUCLEOTIDE SEQUENCE [GENOMIC DNA]</scope>
    <scope>SUBCELLULAR LOCATION</scope>
</reference>
<reference key="3">
    <citation type="journal article" date="1990" name="Yeast">
        <title>The complete sequence of the 8.2 kb segment left of MAT on chromosome III reveals five ORFs, including a gene for a yeast ribokinase.</title>
        <authorList>
            <person name="Thierry A."/>
            <person name="Fairhead C."/>
            <person name="Dujon B."/>
        </authorList>
    </citation>
    <scope>NUCLEOTIDE SEQUENCE [GENOMIC DNA]</scope>
    <source>
        <strain>ATCC 96604 / S288c / FY1679</strain>
    </source>
</reference>
<reference key="4">
    <citation type="journal article" date="1991" name="Yeast">
        <title>The complete sequence of a 7.5 kb region of chromosome III from Saccharomyces cerevisiae that lies between CRY1 and MAT.</title>
        <authorList>
            <person name="Wicksteed B.L."/>
            <person name="Roberts A.B."/>
            <person name="Sagliocco F.A."/>
            <person name="Brown A.J.P."/>
        </authorList>
    </citation>
    <scope>NUCLEOTIDE SEQUENCE [GENOMIC DNA]</scope>
</reference>
<reference key="5">
    <citation type="journal article" date="1992" name="Nature">
        <title>The complete DNA sequence of yeast chromosome III.</title>
        <authorList>
            <person name="Oliver S.G."/>
            <person name="van der Aart Q.J.M."/>
            <person name="Agostoni-Carbone M.L."/>
            <person name="Aigle M."/>
            <person name="Alberghina L."/>
            <person name="Alexandraki D."/>
            <person name="Antoine G."/>
            <person name="Anwar R."/>
            <person name="Ballesta J.P.G."/>
            <person name="Benit P."/>
            <person name="Berben G."/>
            <person name="Bergantino E."/>
            <person name="Biteau N."/>
            <person name="Bolle P.-A."/>
            <person name="Bolotin-Fukuhara M."/>
            <person name="Brown A."/>
            <person name="Brown A.J.P."/>
            <person name="Buhler J.-M."/>
            <person name="Carcano C."/>
            <person name="Carignani G."/>
            <person name="Cederberg H."/>
            <person name="Chanet R."/>
            <person name="Contreras R."/>
            <person name="Crouzet M."/>
            <person name="Daignan-Fornier B."/>
            <person name="Defoor E."/>
            <person name="Delgado M.D."/>
            <person name="Demolder J."/>
            <person name="Doira C."/>
            <person name="Dubois E."/>
            <person name="Dujon B."/>
            <person name="Duesterhoeft A."/>
            <person name="Erdmann D."/>
            <person name="Esteban M."/>
            <person name="Fabre F."/>
            <person name="Fairhead C."/>
            <person name="Faye G."/>
            <person name="Feldmann H."/>
            <person name="Fiers W."/>
            <person name="Francingues-Gaillard M.-C."/>
            <person name="Franco L."/>
            <person name="Frontali L."/>
            <person name="Fukuhara H."/>
            <person name="Fuller L.J."/>
            <person name="Galland P."/>
            <person name="Gent M.E."/>
            <person name="Gigot D."/>
            <person name="Gilliquet V."/>
            <person name="Glansdorff N."/>
            <person name="Goffeau A."/>
            <person name="Grenson M."/>
            <person name="Grisanti P."/>
            <person name="Grivell L.A."/>
            <person name="de Haan M."/>
            <person name="Haasemann M."/>
            <person name="Hatat D."/>
            <person name="Hoenicka J."/>
            <person name="Hegemann J.H."/>
            <person name="Herbert C.J."/>
            <person name="Hilger F."/>
            <person name="Hohmann S."/>
            <person name="Hollenberg C.P."/>
            <person name="Huse K."/>
            <person name="Iborra F."/>
            <person name="Indge K.J."/>
            <person name="Isono K."/>
            <person name="Jacq C."/>
            <person name="Jacquet M."/>
            <person name="James C.M."/>
            <person name="Jauniaux J.-C."/>
            <person name="Jia Y."/>
            <person name="Jimenez A."/>
            <person name="Kelly A."/>
            <person name="Kleinhans U."/>
            <person name="Kreisl P."/>
            <person name="Lanfranchi G."/>
            <person name="Lewis C."/>
            <person name="van der Linden C.G."/>
            <person name="Lucchini G."/>
            <person name="Lutzenkirchen K."/>
            <person name="Maat M.J."/>
            <person name="Mallet L."/>
            <person name="Mannhaupt G."/>
            <person name="Martegani E."/>
            <person name="Mathieu A."/>
            <person name="Maurer C.T.C."/>
            <person name="McConnell D."/>
            <person name="McKee R.A."/>
            <person name="Messenguy F."/>
            <person name="Mewes H.-W."/>
            <person name="Molemans F."/>
            <person name="Montague M.A."/>
            <person name="Muzi Falconi M."/>
            <person name="Navas L."/>
            <person name="Newlon C.S."/>
            <person name="Noone D."/>
            <person name="Pallier C."/>
            <person name="Panzeri L."/>
            <person name="Pearson B.M."/>
            <person name="Perea J."/>
            <person name="Philippsen P."/>
            <person name="Pierard A."/>
            <person name="Planta R.J."/>
            <person name="Plevani P."/>
            <person name="Poetsch B."/>
            <person name="Pohl F.M."/>
            <person name="Purnelle B."/>
            <person name="Ramezani Rad M."/>
            <person name="Rasmussen S.W."/>
            <person name="Raynal A."/>
            <person name="Remacha M.A."/>
            <person name="Richterich P."/>
            <person name="Roberts A.B."/>
            <person name="Rodriguez F."/>
            <person name="Sanz E."/>
            <person name="Schaaff-Gerstenschlaeger I."/>
            <person name="Scherens B."/>
            <person name="Schweitzer B."/>
            <person name="Shu Y."/>
            <person name="Skala J."/>
            <person name="Slonimski P.P."/>
            <person name="Sor F."/>
            <person name="Soustelle C."/>
            <person name="Spiegelberg R."/>
            <person name="Stateva L.I."/>
            <person name="Steensma H.Y."/>
            <person name="Steiner S."/>
            <person name="Thierry A."/>
            <person name="Thireos G."/>
            <person name="Tzermia M."/>
            <person name="Urrestarazu L.A."/>
            <person name="Valle G."/>
            <person name="Vetter I."/>
            <person name="van Vliet-Reedijk J.C."/>
            <person name="Voet M."/>
            <person name="Volckaert G."/>
            <person name="Vreken P."/>
            <person name="Wang H."/>
            <person name="Warmington J.R."/>
            <person name="von Wettstein D."/>
            <person name="Wicksteed B.L."/>
            <person name="Wilson C."/>
            <person name="Wurst H."/>
            <person name="Xu G."/>
            <person name="Yoshikawa A."/>
            <person name="Zimmermann F.K."/>
            <person name="Sgouros J.G."/>
        </authorList>
    </citation>
    <scope>NUCLEOTIDE SEQUENCE [LARGE SCALE GENOMIC DNA]</scope>
    <source>
        <strain>ATCC 204508 / S288c</strain>
    </source>
</reference>
<reference key="6">
    <citation type="journal article" date="2014" name="G3 (Bethesda)">
        <title>The reference genome sequence of Saccharomyces cerevisiae: Then and now.</title>
        <authorList>
            <person name="Engel S.R."/>
            <person name="Dietrich F.S."/>
            <person name="Fisk D.G."/>
            <person name="Binkley G."/>
            <person name="Balakrishnan R."/>
            <person name="Costanzo M.C."/>
            <person name="Dwight S.S."/>
            <person name="Hitz B.C."/>
            <person name="Karra K."/>
            <person name="Nash R.S."/>
            <person name="Weng S."/>
            <person name="Wong E.D."/>
            <person name="Lloyd P."/>
            <person name="Skrzypek M.S."/>
            <person name="Miyasato S.R."/>
            <person name="Simison M."/>
            <person name="Cherry J.M."/>
        </authorList>
    </citation>
    <scope>GENOME REANNOTATION</scope>
    <source>
        <strain>ATCC 204508 / S288c</strain>
    </source>
</reference>
<reference key="7">
    <citation type="journal article" date="1993" name="Lipids">
        <title>General resistance to sterol biosynthesis inhibitors in Saccharomyces cerevisiae.</title>
        <authorList>
            <person name="Ladeveze V."/>
            <person name="Marcireau C."/>
            <person name="Delourme D."/>
            <person name="Karst F."/>
        </authorList>
    </citation>
    <scope>IDENTIFICATION</scope>
</reference>
<reference key="8">
    <citation type="journal article" date="1997" name="J. Biol. Chem.">
        <title>ELO2 and ELO3, homologues of the Saccharomyces cerevisiae ELO1 gene, function in fatty acid elongation and are required for sphingolipid formation.</title>
        <authorList>
            <person name="Oh C.-S."/>
            <person name="Toke D.A."/>
            <person name="Mandala S."/>
            <person name="Martin C.E."/>
        </authorList>
    </citation>
    <scope>FUNCTION</scope>
</reference>
<reference key="9">
    <citation type="journal article" date="2002" name="J. Biol. Chem.">
        <title>The Saccharomyces cerevisiae YBR159w gene encodes the 3-ketoreductase of the microsomal fatty acid elongase.</title>
        <authorList>
            <person name="Han G."/>
            <person name="Gable K."/>
            <person name="Kohlwein S.D."/>
            <person name="Beaudoin F."/>
            <person name="Napier J.A."/>
            <person name="Dunn T.M."/>
        </authorList>
    </citation>
    <scope>CATALYTIC ACTIVITY</scope>
    <scope>SUBCELLULAR LOCATION</scope>
</reference>
<reference key="10">
    <citation type="journal article" date="2003" name="Mol. Genet. Genomics">
        <title>Functional differentiation and selective inactivation of multiple Saccharomyces cerevisiae genes involved in very-long-chain fatty acid synthesis.</title>
        <authorList>
            <person name="Roessler H."/>
            <person name="Rieck C."/>
            <person name="Delong T."/>
            <person name="Hoja U."/>
            <person name="Schweizer E."/>
        </authorList>
    </citation>
    <scope>FUNCTION</scope>
    <scope>CATALYTIC ACTIVITY</scope>
</reference>
<reference key="11">
    <citation type="journal article" date="2003" name="Nature">
        <title>Global analysis of protein localization in budding yeast.</title>
        <authorList>
            <person name="Huh W.-K."/>
            <person name="Falvo J.V."/>
            <person name="Gerke L.C."/>
            <person name="Carroll A.S."/>
            <person name="Howson R.W."/>
            <person name="Weissman J.S."/>
            <person name="O'Shea E.K."/>
        </authorList>
    </citation>
    <scope>SUBCELLULAR LOCATION [LARGE SCALE ANALYSIS]</scope>
</reference>
<reference key="12">
    <citation type="journal article" date="2003" name="Nature">
        <title>Global analysis of protein expression in yeast.</title>
        <authorList>
            <person name="Ghaemmaghami S."/>
            <person name="Huh W.-K."/>
            <person name="Bower K."/>
            <person name="Howson R.W."/>
            <person name="Belle A."/>
            <person name="Dephoure N."/>
            <person name="O'Shea E.K."/>
            <person name="Weissman J.S."/>
        </authorList>
    </citation>
    <scope>LEVEL OF PROTEIN EXPRESSION [LARGE SCALE ANALYSIS]</scope>
</reference>
<reference key="13">
    <citation type="journal article" date="2006" name="Proc. Natl. Acad. Sci. U.S.A.">
        <title>A global topology map of the Saccharomyces cerevisiae membrane proteome.</title>
        <authorList>
            <person name="Kim H."/>
            <person name="Melen K."/>
            <person name="Oesterberg M."/>
            <person name="von Heijne G."/>
        </authorList>
    </citation>
    <scope>TOPOLOGY [LARGE SCALE ANALYSIS]</scope>
    <source>
        <strain>ATCC 208353 / W303-1A</strain>
    </source>
</reference>
<reference key="14">
    <citation type="journal article" date="2007" name="Cell">
        <title>A molecular caliper mechanism for determining very long-chain fatty acid length.</title>
        <authorList>
            <person name="Denic V."/>
            <person name="Weissman J.S."/>
        </authorList>
    </citation>
    <scope>FUNCTION</scope>
    <scope>CATALYTIC ACTIVITY</scope>
</reference>
<reference key="15">
    <citation type="journal article" date="2007" name="J. Proteome Res.">
        <title>Large-scale phosphorylation analysis of alpha-factor-arrested Saccharomyces cerevisiae.</title>
        <authorList>
            <person name="Li X."/>
            <person name="Gerber S.A."/>
            <person name="Rudner A.D."/>
            <person name="Beausoleil S.A."/>
            <person name="Haas W."/>
            <person name="Villen J."/>
            <person name="Elias J.E."/>
            <person name="Gygi S.P."/>
        </authorList>
    </citation>
    <scope>PHOSPHORYLATION [LARGE SCALE ANALYSIS] AT THR-334 AND SER-338</scope>
    <scope>IDENTIFICATION BY MASS SPECTROMETRY [LARGE SCALE ANALYSIS]</scope>
    <source>
        <strain>ADR376</strain>
    </source>
</reference>
<reference key="16">
    <citation type="journal article" date="2007" name="Proc. Natl. Acad. Sci. U.S.A.">
        <title>Analysis of phosphorylation sites on proteins from Saccharomyces cerevisiae by electron transfer dissociation (ETD) mass spectrometry.</title>
        <authorList>
            <person name="Chi A."/>
            <person name="Huttenhower C."/>
            <person name="Geer L.Y."/>
            <person name="Coon J.J."/>
            <person name="Syka J.E.P."/>
            <person name="Bai D.L."/>
            <person name="Shabanowitz J."/>
            <person name="Burke D.J."/>
            <person name="Troyanskaya O.G."/>
            <person name="Hunt D.F."/>
        </authorList>
    </citation>
    <scope>PHOSPHORYLATION [LARGE SCALE ANALYSIS] AT THR-334; SER-336 AND SER-338</scope>
    <scope>IDENTIFICATION BY MASS SPECTROMETRY [LARGE SCALE ANALYSIS]</scope>
</reference>
<reference key="17">
    <citation type="journal article" date="2008" name="Mol. Cell. Proteomics">
        <title>A multidimensional chromatography technology for in-depth phosphoproteome analysis.</title>
        <authorList>
            <person name="Albuquerque C.P."/>
            <person name="Smolka M.B."/>
            <person name="Payne S.H."/>
            <person name="Bafna V."/>
            <person name="Eng J."/>
            <person name="Zhou H."/>
        </authorList>
    </citation>
    <scope>IDENTIFICATION BY MASS SPECTROMETRY [LARGE SCALE ANALYSIS]</scope>
</reference>
<reference key="18">
    <citation type="journal article" date="2009" name="Science">
        <title>Global analysis of Cdk1 substrate phosphorylation sites provides insights into evolution.</title>
        <authorList>
            <person name="Holt L.J."/>
            <person name="Tuch B.B."/>
            <person name="Villen J."/>
            <person name="Johnson A.D."/>
            <person name="Gygi S.P."/>
            <person name="Morgan D.O."/>
        </authorList>
    </citation>
    <scope>PHOSPHORYLATION [LARGE SCALE ANALYSIS] AT THR-334; SER-336 AND SER-338</scope>
    <scope>IDENTIFICATION BY MASS SPECTROMETRY [LARGE SCALE ANALYSIS]</scope>
</reference>
<reference key="19">
    <citation type="journal article" date="2012" name="Proc. Natl. Acad. Sci. U.S.A.">
        <title>N-terminal acetylome analyses and functional insights of the N-terminal acetyltransferase NatB.</title>
        <authorList>
            <person name="Van Damme P."/>
            <person name="Lasa M."/>
            <person name="Polevoda B."/>
            <person name="Gazquez C."/>
            <person name="Elosegui-Artola A."/>
            <person name="Kim D.S."/>
            <person name="De Juan-Pardo E."/>
            <person name="Demeyer K."/>
            <person name="Hole K."/>
            <person name="Larrea E."/>
            <person name="Timmerman E."/>
            <person name="Prieto J."/>
            <person name="Arnesen T."/>
            <person name="Sherman F."/>
            <person name="Gevaert K."/>
            <person name="Aldabe R."/>
        </authorList>
    </citation>
    <scope>IDENTIFICATION BY MASS SPECTROMETRY [LARGE SCALE ANALYSIS]</scope>
</reference>
<reference key="20">
    <citation type="journal article" date="2018" name="Microbiol. Res.">
        <title>A critical role for very long-chain fatty acid elongases in oleic acid-mediated Saccharomyces cerevisiae cytotoxicity.</title>
        <authorList>
            <person name="Wang Q."/>
            <person name="Du X."/>
            <person name="Ma K."/>
            <person name="Shi P."/>
            <person name="Liu W."/>
            <person name="Sun J."/>
            <person name="Peng M."/>
            <person name="Huang Z."/>
        </authorList>
    </citation>
    <scope>FUNCTION</scope>
</reference>
<accession>P25358</accession>
<accession>D6VR44</accession>
<organism>
    <name type="scientific">Saccharomyces cerevisiae (strain ATCC 204508 / S288c)</name>
    <name type="common">Baker's yeast</name>
    <dbReference type="NCBI Taxonomy" id="559292"/>
    <lineage>
        <taxon>Eukaryota</taxon>
        <taxon>Fungi</taxon>
        <taxon>Dikarya</taxon>
        <taxon>Ascomycota</taxon>
        <taxon>Saccharomycotina</taxon>
        <taxon>Saccharomycetes</taxon>
        <taxon>Saccharomycetales</taxon>
        <taxon>Saccharomycetaceae</taxon>
        <taxon>Saccharomyces</taxon>
    </lineage>
</organism>
<name>ELO2_YEAST</name>
<evidence type="ECO:0000255" key="1"/>
<evidence type="ECO:0000255" key="2">
    <source>
        <dbReference type="PROSITE-ProRule" id="PRU00498"/>
    </source>
</evidence>
<evidence type="ECO:0000269" key="3">
    <source>
    </source>
</evidence>
<evidence type="ECO:0000269" key="4">
    <source>
    </source>
</evidence>
<evidence type="ECO:0000269" key="5">
    <source>
    </source>
</evidence>
<evidence type="ECO:0000269" key="6">
    <source>
    </source>
</evidence>
<evidence type="ECO:0000269" key="7">
    <source>
    </source>
</evidence>
<evidence type="ECO:0000269" key="8">
    <source>
    </source>
</evidence>
<evidence type="ECO:0000269" key="9">
    <source>
    </source>
</evidence>
<evidence type="ECO:0000269" key="10">
    <source>
    </source>
</evidence>
<evidence type="ECO:0000269" key="11">
    <source>
    </source>
</evidence>
<evidence type="ECO:0000269" key="12">
    <source>
    </source>
</evidence>
<evidence type="ECO:0000303" key="13">
    <source>
    </source>
</evidence>
<evidence type="ECO:0000303" key="14">
    <source>
    </source>
</evidence>
<evidence type="ECO:0000303" key="15">
    <source>
    </source>
</evidence>
<evidence type="ECO:0000303" key="16">
    <source>
    </source>
</evidence>
<evidence type="ECO:0000305" key="17"/>
<evidence type="ECO:0000305" key="18">
    <source>
    </source>
</evidence>
<evidence type="ECO:0000305" key="19">
    <source>
    </source>
</evidence>
<evidence type="ECO:0000312" key="20">
    <source>
        <dbReference type="SGD" id="S000000630"/>
    </source>
</evidence>
<evidence type="ECO:0007744" key="21">
    <source>
    </source>
</evidence>
<evidence type="ECO:0007744" key="22">
    <source>
    </source>
</evidence>
<evidence type="ECO:0007744" key="23">
    <source>
    </source>
</evidence>
<gene>
    <name evidence="15" type="primary">ELO2</name>
    <name evidence="14" type="synonym">FEN1</name>
    <name evidence="13" type="synonym">GNS1</name>
    <name evidence="16" type="synonym">VBM2</name>
    <name evidence="20" type="ordered locus">YCR034W</name>
    <name type="ORF">YCR34W</name>
    <name type="ORF">YCR521</name>
</gene>
<sequence>MNSLVTQYAAPLFERYPQLHDYLPTLERPFFNISLWEHFDDVVTRVTNGRFVPSEFQFIAGELPLSTLPPVLYAITAYYVIIFGGRFLLSKSKPFKLNGLFQLHNLVLTSLSLTLLLLMVEQLVPIIVQHGLYFAICNIGAWTQPLVTLYYMNYIVKFIEFIDTFFLVLKHKKLTFLHTYHHGATALLCYTQLMGTTSISWVPISLNLGVHVVMYWYYFLAARGIRVWWKEWVTRFQIIQFVLDIGFIYFAVYQKAVHLYFPILPHCGDCVGSTTATFAGCAIISSYLVLFISFYINVYKRKGTKTSRVVKRAHGGVAAKVNEYVNVDLKNVPTPSPSPKPQHRRKR</sequence>
<proteinExistence type="evidence at protein level"/>
<feature type="chain" id="PRO_0000207549" description="Fatty acid elongase 2">
    <location>
        <begin position="1"/>
        <end position="347"/>
    </location>
</feature>
<feature type="topological domain" description="Lumenal" evidence="18">
    <location>
        <begin position="1"/>
        <end position="62"/>
    </location>
</feature>
<feature type="transmembrane region" description="Helical; Name=1" evidence="1">
    <location>
        <begin position="63"/>
        <end position="83"/>
    </location>
</feature>
<feature type="topological domain" description="Cytoplasmic" evidence="18">
    <location>
        <begin position="84"/>
        <end position="96"/>
    </location>
</feature>
<feature type="transmembrane region" description="Helical; Name=2" evidence="1">
    <location>
        <begin position="97"/>
        <end position="119"/>
    </location>
</feature>
<feature type="topological domain" description="Lumenal" evidence="18">
    <location>
        <begin position="120"/>
        <end position="122"/>
    </location>
</feature>
<feature type="transmembrane region" description="Helical; Name=3" evidence="1">
    <location>
        <begin position="123"/>
        <end position="142"/>
    </location>
</feature>
<feature type="topological domain" description="Cytoplasmic" evidence="18">
    <location>
        <begin position="143"/>
        <end position="146"/>
    </location>
</feature>
<feature type="transmembrane region" description="Helical; Name=4" evidence="1">
    <location>
        <begin position="147"/>
        <end position="169"/>
    </location>
</feature>
<feature type="topological domain" description="Lumenal" evidence="18">
    <location>
        <begin position="170"/>
        <end position="200"/>
    </location>
</feature>
<feature type="transmembrane region" description="Helical; Name=5" evidence="1">
    <location>
        <begin position="201"/>
        <end position="221"/>
    </location>
</feature>
<feature type="topological domain" description="Cytoplasmic" evidence="18">
    <location>
        <begin position="222"/>
        <end position="231"/>
    </location>
</feature>
<feature type="transmembrane region" description="Helical; Name=6" evidence="1">
    <location>
        <begin position="232"/>
        <end position="254"/>
    </location>
</feature>
<feature type="topological domain" description="Lumenal" evidence="18">
    <location>
        <begin position="255"/>
        <end position="275"/>
    </location>
</feature>
<feature type="transmembrane region" description="Helical; Name=7" evidence="1">
    <location>
        <begin position="276"/>
        <end position="296"/>
    </location>
</feature>
<feature type="topological domain" description="Cytoplasmic" evidence="7">
    <location>
        <begin position="297"/>
        <end position="347"/>
    </location>
</feature>
<feature type="short sequence motif" description="HxxHH motif" evidence="19">
    <location>
        <begin position="178"/>
        <end position="182"/>
    </location>
</feature>
<feature type="short sequence motif" description="Di-lysine-like motif" evidence="16">
    <location>
        <begin position="344"/>
        <end position="347"/>
    </location>
</feature>
<feature type="site" description="Determines the chain length of the elongated VLCFA" evidence="19">
    <location>
        <position position="255"/>
    </location>
</feature>
<feature type="modified residue" description="Phosphothreonine" evidence="21 22 23">
    <location>
        <position position="334"/>
    </location>
</feature>
<feature type="modified residue" description="Phosphoserine" evidence="21 23">
    <location>
        <position position="336"/>
    </location>
</feature>
<feature type="modified residue" description="Phosphoserine" evidence="21 22 23">
    <location>
        <position position="338"/>
    </location>
</feature>
<feature type="glycosylation site" description="N-linked (GlcNAc...) asparagine" evidence="2">
    <location>
        <position position="32"/>
    </location>
</feature>
<dbReference type="EC" id="2.3.1.199" evidence="4"/>
<dbReference type="EMBL" id="S78624">
    <property type="protein sequence ID" value="AAB21260.1"/>
    <property type="molecule type" value="Genomic_DNA"/>
</dbReference>
<dbReference type="EMBL" id="X56909">
    <property type="protein sequence ID" value="CAA40226.1"/>
    <property type="molecule type" value="Genomic_DNA"/>
</dbReference>
<dbReference type="EMBL" id="X59720">
    <property type="protein sequence ID" value="CAA42301.1"/>
    <property type="molecule type" value="Genomic_DNA"/>
</dbReference>
<dbReference type="EMBL" id="AF012655">
    <property type="protein sequence ID" value="AAB87766.1"/>
    <property type="molecule type" value="Genomic_DNA"/>
</dbReference>
<dbReference type="EMBL" id="BK006937">
    <property type="protein sequence ID" value="DAA07513.1"/>
    <property type="molecule type" value="Genomic_DNA"/>
</dbReference>
<dbReference type="PIR" id="S12916">
    <property type="entry name" value="S12916"/>
</dbReference>
<dbReference type="RefSeq" id="NP_009963.1">
    <property type="nucleotide sequence ID" value="NM_001178748.1"/>
</dbReference>
<dbReference type="SMR" id="P25358"/>
<dbReference type="BioGRID" id="31017">
    <property type="interactions" value="557"/>
</dbReference>
<dbReference type="DIP" id="DIP-4176N"/>
<dbReference type="FunCoup" id="P25358">
    <property type="interactions" value="796"/>
</dbReference>
<dbReference type="IntAct" id="P25358">
    <property type="interactions" value="26"/>
</dbReference>
<dbReference type="MINT" id="P25358"/>
<dbReference type="STRING" id="4932.YCR034W"/>
<dbReference type="SwissLipids" id="SLP:000000493"/>
<dbReference type="GlyCosmos" id="P25358">
    <property type="glycosylation" value="1 site, No reported glycans"/>
</dbReference>
<dbReference type="GlyGen" id="P25358">
    <property type="glycosylation" value="2 sites"/>
</dbReference>
<dbReference type="iPTMnet" id="P25358"/>
<dbReference type="PaxDb" id="4932-YCR034W"/>
<dbReference type="PeptideAtlas" id="P25358"/>
<dbReference type="EnsemblFungi" id="YCR034W_mRNA">
    <property type="protein sequence ID" value="YCR034W"/>
    <property type="gene ID" value="YCR034W"/>
</dbReference>
<dbReference type="GeneID" id="850400"/>
<dbReference type="KEGG" id="sce:YCR034W"/>
<dbReference type="AGR" id="SGD:S000000630"/>
<dbReference type="SGD" id="S000000630">
    <property type="gene designation" value="ELO2"/>
</dbReference>
<dbReference type="VEuPathDB" id="FungiDB:YCR034W"/>
<dbReference type="eggNOG" id="KOG3071">
    <property type="taxonomic scope" value="Eukaryota"/>
</dbReference>
<dbReference type="GeneTree" id="ENSGT01050000244965"/>
<dbReference type="HOGENOM" id="CLU_048483_6_1_1"/>
<dbReference type="InParanoid" id="P25358"/>
<dbReference type="OMA" id="PISWVPI"/>
<dbReference type="OrthoDB" id="434092at2759"/>
<dbReference type="BioCyc" id="MetaCyc:YCR034W-MONOMER"/>
<dbReference type="BioCyc" id="YEAST:YCR034W-MONOMER"/>
<dbReference type="Reactome" id="R-SCE-2046105">
    <property type="pathway name" value="Linoleic acid (LA) metabolism"/>
</dbReference>
<dbReference type="Reactome" id="R-SCE-2046106">
    <property type="pathway name" value="alpha-linolenic acid (ALA) metabolism"/>
</dbReference>
<dbReference type="Reactome" id="R-SCE-75876">
    <property type="pathway name" value="Synthesis of very long-chain fatty acyl-CoAs"/>
</dbReference>
<dbReference type="BioGRID-ORCS" id="850400">
    <property type="hits" value="6 hits in 10 CRISPR screens"/>
</dbReference>
<dbReference type="PRO" id="PR:P25358"/>
<dbReference type="Proteomes" id="UP000002311">
    <property type="component" value="Chromosome III"/>
</dbReference>
<dbReference type="RNAct" id="P25358">
    <property type="molecule type" value="protein"/>
</dbReference>
<dbReference type="GO" id="GO:0005783">
    <property type="term" value="C:endoplasmic reticulum"/>
    <property type="evidence" value="ECO:0000314"/>
    <property type="project" value="SGD"/>
</dbReference>
<dbReference type="GO" id="GO:0005789">
    <property type="term" value="C:endoplasmic reticulum membrane"/>
    <property type="evidence" value="ECO:0000318"/>
    <property type="project" value="GO_Central"/>
</dbReference>
<dbReference type="GO" id="GO:0009922">
    <property type="term" value="F:fatty acid elongase activity"/>
    <property type="evidence" value="ECO:0000315"/>
    <property type="project" value="SGD"/>
</dbReference>
<dbReference type="GO" id="GO:0030497">
    <property type="term" value="P:fatty acid elongation"/>
    <property type="evidence" value="ECO:0000315"/>
    <property type="project" value="SGD"/>
</dbReference>
<dbReference type="GO" id="GO:0034625">
    <property type="term" value="P:fatty acid elongation, monounsaturated fatty acid"/>
    <property type="evidence" value="ECO:0000318"/>
    <property type="project" value="GO_Central"/>
</dbReference>
<dbReference type="GO" id="GO:0034626">
    <property type="term" value="P:fatty acid elongation, polyunsaturated fatty acid"/>
    <property type="evidence" value="ECO:0000318"/>
    <property type="project" value="GO_Central"/>
</dbReference>
<dbReference type="GO" id="GO:0019367">
    <property type="term" value="P:fatty acid elongation, saturated fatty acid"/>
    <property type="evidence" value="ECO:0000318"/>
    <property type="project" value="GO_Central"/>
</dbReference>
<dbReference type="GO" id="GO:0032511">
    <property type="term" value="P:late endosome to vacuole transport via multivesicular body sorting pathway"/>
    <property type="evidence" value="ECO:0000316"/>
    <property type="project" value="SGD"/>
</dbReference>
<dbReference type="GO" id="GO:0030148">
    <property type="term" value="P:sphingolipid biosynthetic process"/>
    <property type="evidence" value="ECO:0000315"/>
    <property type="project" value="SGD"/>
</dbReference>
<dbReference type="GO" id="GO:0042761">
    <property type="term" value="P:very long-chain fatty acid biosynthetic process"/>
    <property type="evidence" value="ECO:0000315"/>
    <property type="project" value="SGD"/>
</dbReference>
<dbReference type="GO" id="GO:0016192">
    <property type="term" value="P:vesicle-mediated transport"/>
    <property type="evidence" value="ECO:0000315"/>
    <property type="project" value="SGD"/>
</dbReference>
<dbReference type="InterPro" id="IPR030457">
    <property type="entry name" value="ELO_CS"/>
</dbReference>
<dbReference type="InterPro" id="IPR002076">
    <property type="entry name" value="ELO_fam"/>
</dbReference>
<dbReference type="PANTHER" id="PTHR11157:SF134">
    <property type="entry name" value="ELONGATION OF FATTY ACIDS PROTEIN 1-RELATED"/>
    <property type="match status" value="1"/>
</dbReference>
<dbReference type="PANTHER" id="PTHR11157">
    <property type="entry name" value="FATTY ACID ACYL TRANSFERASE-RELATED"/>
    <property type="match status" value="1"/>
</dbReference>
<dbReference type="Pfam" id="PF01151">
    <property type="entry name" value="ELO"/>
    <property type="match status" value="1"/>
</dbReference>
<dbReference type="PROSITE" id="PS01188">
    <property type="entry name" value="ELO"/>
    <property type="match status" value="1"/>
</dbReference>